<dbReference type="EMBL" id="AF168712">
    <property type="protein sequence ID" value="AAF87314.1"/>
    <property type="status" value="ALT_INIT"/>
    <property type="molecule type" value="mRNA"/>
</dbReference>
<dbReference type="EMBL" id="AF276707">
    <property type="protein sequence ID" value="AAK69439.2"/>
    <property type="molecule type" value="mRNA"/>
</dbReference>
<dbReference type="EMBL" id="EF445040">
    <property type="protein sequence ID" value="ACA06090.1"/>
    <property type="molecule type" value="Genomic_DNA"/>
</dbReference>
<dbReference type="EMBL" id="AK057005">
    <property type="protein sequence ID" value="BAG51841.1"/>
    <property type="molecule type" value="mRNA"/>
</dbReference>
<dbReference type="EMBL" id="AP005482">
    <property type="status" value="NOT_ANNOTATED_CDS"/>
    <property type="molecule type" value="Genomic_DNA"/>
</dbReference>
<dbReference type="EMBL" id="CH471113">
    <property type="protein sequence ID" value="EAX01540.1"/>
    <property type="molecule type" value="Genomic_DNA"/>
</dbReference>
<dbReference type="EMBL" id="CH471113">
    <property type="protein sequence ID" value="EAX01541.1"/>
    <property type="molecule type" value="Genomic_DNA"/>
</dbReference>
<dbReference type="EMBL" id="BC013356">
    <property type="protein sequence ID" value="AAH13356.1"/>
    <property type="molecule type" value="mRNA"/>
</dbReference>
<dbReference type="EMBL" id="CR457181">
    <property type="protein sequence ID" value="CAG33462.1"/>
    <property type="molecule type" value="mRNA"/>
</dbReference>
<dbReference type="EMBL" id="BR000237">
    <property type="protein sequence ID" value="FAA00023.1"/>
    <property type="molecule type" value="mRNA"/>
</dbReference>
<dbReference type="CCDS" id="CCDS11862.1">
    <molecule id="Q969U7-1"/>
</dbReference>
<dbReference type="CCDS" id="CCDS67440.1">
    <molecule id="Q969U7-2"/>
</dbReference>
<dbReference type="RefSeq" id="NP_064617.2">
    <molecule id="Q969U7-1"/>
    <property type="nucleotide sequence ID" value="NM_020232.4"/>
</dbReference>
<dbReference type="RefSeq" id="NP_671692.1">
    <molecule id="Q969U7-2"/>
    <property type="nucleotide sequence ID" value="NM_147163.2"/>
</dbReference>
<dbReference type="PDB" id="8QYJ">
    <property type="method" value="EM"/>
    <property type="resolution" value="2.73 A"/>
    <property type="chains" value="J=1-264"/>
</dbReference>
<dbReference type="PDB" id="8QYL">
    <property type="method" value="EM"/>
    <property type="resolution" value="2.67 A"/>
    <property type="chains" value="J=1-264"/>
</dbReference>
<dbReference type="PDB" id="8QYM">
    <property type="method" value="EM"/>
    <property type="resolution" value="2.73 A"/>
    <property type="chains" value="J=1-264"/>
</dbReference>
<dbReference type="PDB" id="8QYN">
    <property type="method" value="EM"/>
    <property type="resolution" value="2.88 A"/>
    <property type="chains" value="J=1-264"/>
</dbReference>
<dbReference type="PDB" id="8QYS">
    <property type="method" value="EM"/>
    <property type="resolution" value="3.89 A"/>
    <property type="chains" value="J/a=1-264"/>
</dbReference>
<dbReference type="PDB" id="8QZ9">
    <property type="method" value="EM"/>
    <property type="resolution" value="2.95 A"/>
    <property type="chains" value="J=1-264"/>
</dbReference>
<dbReference type="PDB" id="8TM3">
    <property type="method" value="EM"/>
    <property type="resolution" value="3.00 A"/>
    <property type="chains" value="d=1-264"/>
</dbReference>
<dbReference type="PDB" id="8TM4">
    <property type="method" value="EM"/>
    <property type="resolution" value="3.00 A"/>
    <property type="chains" value="d=1-264"/>
</dbReference>
<dbReference type="PDB" id="8TM5">
    <property type="method" value="EM"/>
    <property type="resolution" value="3.00 A"/>
    <property type="chains" value="d=1-264"/>
</dbReference>
<dbReference type="PDB" id="8TM6">
    <property type="method" value="EM"/>
    <property type="resolution" value="2.80 A"/>
    <property type="chains" value="d/g=1-264"/>
</dbReference>
<dbReference type="PDB" id="8YIX">
    <property type="method" value="EM"/>
    <property type="resolution" value="2.91 A"/>
    <property type="chains" value="g=1-264"/>
</dbReference>
<dbReference type="PDB" id="8YIY">
    <property type="method" value="EM"/>
    <property type="resolution" value="3.41 A"/>
    <property type="chains" value="d/g=1-264"/>
</dbReference>
<dbReference type="PDB" id="8YIZ">
    <property type="method" value="EM"/>
    <property type="resolution" value="3.79 A"/>
    <property type="chains" value="g=1-264"/>
</dbReference>
<dbReference type="PDBsum" id="8QYJ"/>
<dbReference type="PDBsum" id="8QYL"/>
<dbReference type="PDBsum" id="8QYM"/>
<dbReference type="PDBsum" id="8QYN"/>
<dbReference type="PDBsum" id="8QYS"/>
<dbReference type="PDBsum" id="8QZ9"/>
<dbReference type="PDBsum" id="8TM3"/>
<dbReference type="PDBsum" id="8TM4"/>
<dbReference type="PDBsum" id="8TM5"/>
<dbReference type="PDBsum" id="8TM6"/>
<dbReference type="PDBsum" id="8YIX"/>
<dbReference type="PDBsum" id="8YIY"/>
<dbReference type="PDBsum" id="8YIZ"/>
<dbReference type="EMDB" id="EMD-18755"/>
<dbReference type="EMDB" id="EMD-18757"/>
<dbReference type="EMDB" id="EMD-18758"/>
<dbReference type="EMDB" id="EMD-18759"/>
<dbReference type="EMDB" id="EMD-18761"/>
<dbReference type="EMDB" id="EMD-18773"/>
<dbReference type="EMDB" id="EMD-39332"/>
<dbReference type="EMDB" id="EMD-39333"/>
<dbReference type="EMDB" id="EMD-39334"/>
<dbReference type="EMDB" id="EMD-41377"/>
<dbReference type="EMDB" id="EMD-41378"/>
<dbReference type="EMDB" id="EMD-41379"/>
<dbReference type="EMDB" id="EMD-41380"/>
<dbReference type="SMR" id="Q969U7"/>
<dbReference type="BioGRID" id="121301">
    <property type="interactions" value="82"/>
</dbReference>
<dbReference type="ComplexPortal" id="CPX-8173">
    <property type="entry name" value="PSMG1-PSMG2 proteasomal chaperone complex"/>
</dbReference>
<dbReference type="CORUM" id="Q969U7"/>
<dbReference type="FunCoup" id="Q969U7">
    <property type="interactions" value="2930"/>
</dbReference>
<dbReference type="IntAct" id="Q969U7">
    <property type="interactions" value="52"/>
</dbReference>
<dbReference type="MINT" id="Q969U7"/>
<dbReference type="STRING" id="9606.ENSP00000325919"/>
<dbReference type="BindingDB" id="Q969U7"/>
<dbReference type="ChEMBL" id="CHEMBL3885624"/>
<dbReference type="GlyGen" id="Q969U7">
    <property type="glycosylation" value="1 site, 1 O-linked glycan (1 site)"/>
</dbReference>
<dbReference type="iPTMnet" id="Q969U7"/>
<dbReference type="PhosphoSitePlus" id="Q969U7"/>
<dbReference type="SwissPalm" id="Q969U7"/>
<dbReference type="BioMuta" id="PSMG2"/>
<dbReference type="DMDM" id="74731063"/>
<dbReference type="jPOST" id="Q969U7"/>
<dbReference type="MassIVE" id="Q969U7"/>
<dbReference type="PaxDb" id="9606-ENSP00000325919"/>
<dbReference type="PeptideAtlas" id="Q969U7"/>
<dbReference type="ProteomicsDB" id="75848">
    <molecule id="Q969U7-1"/>
</dbReference>
<dbReference type="Pumba" id="Q969U7"/>
<dbReference type="Antibodypedia" id="21950">
    <property type="antibodies" value="266 antibodies from 26 providers"/>
</dbReference>
<dbReference type="DNASU" id="56984"/>
<dbReference type="Ensembl" id="ENST00000317615.11">
    <molecule id="Q969U7-1"/>
    <property type="protein sequence ID" value="ENSP00000325919.6"/>
    <property type="gene ID" value="ENSG00000128789.22"/>
</dbReference>
<dbReference type="Ensembl" id="ENST00000585331.6">
    <molecule id="Q969U7-2"/>
    <property type="protein sequence ID" value="ENSP00000476763.1"/>
    <property type="gene ID" value="ENSG00000128789.22"/>
</dbReference>
<dbReference type="Ensembl" id="ENST00000699164.1">
    <molecule id="Q969U7-2"/>
    <property type="protein sequence ID" value="ENSP00000514171.1"/>
    <property type="gene ID" value="ENSG00000128789.22"/>
</dbReference>
<dbReference type="GeneID" id="56984"/>
<dbReference type="KEGG" id="hsa:56984"/>
<dbReference type="MANE-Select" id="ENST00000317615.11">
    <property type="protein sequence ID" value="ENSP00000325919.6"/>
    <property type="RefSeq nucleotide sequence ID" value="NM_020232.5"/>
    <property type="RefSeq protein sequence ID" value="NP_064617.2"/>
</dbReference>
<dbReference type="UCSC" id="uc002krg.5">
    <molecule id="Q969U7-1"/>
    <property type="organism name" value="human"/>
</dbReference>
<dbReference type="AGR" id="HGNC:24929"/>
<dbReference type="CTD" id="56984"/>
<dbReference type="DisGeNET" id="56984"/>
<dbReference type="GeneCards" id="PSMG2"/>
<dbReference type="HGNC" id="HGNC:24929">
    <property type="gene designation" value="PSMG2"/>
</dbReference>
<dbReference type="HPA" id="ENSG00000128789">
    <property type="expression patterns" value="Low tissue specificity"/>
</dbReference>
<dbReference type="MalaCards" id="PSMG2"/>
<dbReference type="MIM" id="609702">
    <property type="type" value="gene"/>
</dbReference>
<dbReference type="MIM" id="619183">
    <property type="type" value="phenotype"/>
</dbReference>
<dbReference type="neXtProt" id="NX_Q969U7"/>
<dbReference type="OpenTargets" id="ENSG00000128789"/>
<dbReference type="PharmGKB" id="PA162400246"/>
<dbReference type="VEuPathDB" id="HostDB:ENSG00000128789"/>
<dbReference type="eggNOG" id="KOG3112">
    <property type="taxonomic scope" value="Eukaryota"/>
</dbReference>
<dbReference type="GeneTree" id="ENSGT00390000018415"/>
<dbReference type="HOGENOM" id="CLU_062640_1_1_1"/>
<dbReference type="InParanoid" id="Q969U7"/>
<dbReference type="OMA" id="WKEHTGE"/>
<dbReference type="OrthoDB" id="10260712at2759"/>
<dbReference type="PAN-GO" id="Q969U7">
    <property type="GO annotations" value="3 GO annotations based on evolutionary models"/>
</dbReference>
<dbReference type="PhylomeDB" id="Q969U7"/>
<dbReference type="TreeFam" id="TF105397"/>
<dbReference type="PathwayCommons" id="Q969U7"/>
<dbReference type="Reactome" id="R-HSA-9907900">
    <property type="pathway name" value="Proteasome assembly"/>
</dbReference>
<dbReference type="SignaLink" id="Q969U7"/>
<dbReference type="BioGRID-ORCS" id="56984">
    <property type="hits" value="461 hits in 1164 CRISPR screens"/>
</dbReference>
<dbReference type="ChiTaRS" id="PSMG2">
    <property type="organism name" value="human"/>
</dbReference>
<dbReference type="GenomeRNAi" id="56984"/>
<dbReference type="Pharos" id="Q969U7">
    <property type="development level" value="Tbio"/>
</dbReference>
<dbReference type="PRO" id="PR:Q969U7"/>
<dbReference type="Proteomes" id="UP000005640">
    <property type="component" value="Chromosome 18"/>
</dbReference>
<dbReference type="RNAct" id="Q969U7">
    <property type="molecule type" value="protein"/>
</dbReference>
<dbReference type="Bgee" id="ENSG00000128789">
    <property type="expression patterns" value="Expressed in primordial germ cell in gonad and 209 other cell types or tissues"/>
</dbReference>
<dbReference type="ExpressionAtlas" id="Q969U7">
    <property type="expression patterns" value="baseline and differential"/>
</dbReference>
<dbReference type="GO" id="GO:0005829">
    <property type="term" value="C:cytosol"/>
    <property type="evidence" value="ECO:0000318"/>
    <property type="project" value="GO_Central"/>
</dbReference>
<dbReference type="GO" id="GO:0005634">
    <property type="term" value="C:nucleus"/>
    <property type="evidence" value="ECO:0007005"/>
    <property type="project" value="UniProtKB"/>
</dbReference>
<dbReference type="GO" id="GO:0101031">
    <property type="term" value="C:protein folding chaperone complex"/>
    <property type="evidence" value="ECO:0000314"/>
    <property type="project" value="UniProtKB"/>
</dbReference>
<dbReference type="GO" id="GO:0060090">
    <property type="term" value="F:molecular adaptor activity"/>
    <property type="evidence" value="ECO:0000316"/>
    <property type="project" value="UniProtKB"/>
</dbReference>
<dbReference type="GO" id="GO:0051131">
    <property type="term" value="P:chaperone-mediated protein complex assembly"/>
    <property type="evidence" value="ECO:0000314"/>
    <property type="project" value="UniProtKB"/>
</dbReference>
<dbReference type="GO" id="GO:0007094">
    <property type="term" value="P:mitotic spindle assembly checkpoint signaling"/>
    <property type="evidence" value="ECO:0007669"/>
    <property type="project" value="Ensembl"/>
</dbReference>
<dbReference type="GO" id="GO:0043066">
    <property type="term" value="P:negative regulation of apoptotic process"/>
    <property type="evidence" value="ECO:0007669"/>
    <property type="project" value="Ensembl"/>
</dbReference>
<dbReference type="GO" id="GO:0043248">
    <property type="term" value="P:proteasome assembly"/>
    <property type="evidence" value="ECO:0000318"/>
    <property type="project" value="GO_Central"/>
</dbReference>
<dbReference type="FunFam" id="3.40.50.10900:FF:000001">
    <property type="entry name" value="Proteasome assembly chaperone 2"/>
    <property type="match status" value="1"/>
</dbReference>
<dbReference type="FunFam" id="3.40.50.10900:FF:000003">
    <property type="entry name" value="Proteasome assembly chaperone 2"/>
    <property type="match status" value="1"/>
</dbReference>
<dbReference type="Gene3D" id="3.40.50.10900">
    <property type="entry name" value="PAC-like subunit"/>
    <property type="match status" value="2"/>
</dbReference>
<dbReference type="InterPro" id="IPR019151">
    <property type="entry name" value="Proteasome_assmbl_chaperone_2"/>
</dbReference>
<dbReference type="InterPro" id="IPR016562">
    <property type="entry name" value="Proteasome_assmbl_chp_2_euk"/>
</dbReference>
<dbReference type="InterPro" id="IPR038389">
    <property type="entry name" value="PSMG2_sf"/>
</dbReference>
<dbReference type="PANTHER" id="PTHR12970">
    <property type="entry name" value="PROTEASOME ASSEMBLY CHAPERONE 2"/>
    <property type="match status" value="1"/>
</dbReference>
<dbReference type="PANTHER" id="PTHR12970:SF1">
    <property type="entry name" value="PROTEASOME ASSEMBLY CHAPERONE 2"/>
    <property type="match status" value="1"/>
</dbReference>
<dbReference type="Pfam" id="PF09754">
    <property type="entry name" value="PAC2"/>
    <property type="match status" value="1"/>
</dbReference>
<dbReference type="PIRSF" id="PIRSF010044">
    <property type="entry name" value="UCP010044"/>
    <property type="match status" value="1"/>
</dbReference>
<dbReference type="SUPFAM" id="SSF159659">
    <property type="entry name" value="Cgl1923-like"/>
    <property type="match status" value="1"/>
</dbReference>
<reference key="1">
    <citation type="journal article" date="2000" name="Hematol. J.">
        <title>Gene expression in CD34(+) cells from normal bone marrow and leukemic origins.</title>
        <authorList>
            <person name="Gu J."/>
            <person name="Zhang Q.H."/>
            <person name="Huang Q.H."/>
            <person name="Ren S.X."/>
            <person name="Wu X.Y."/>
            <person name="Ye M."/>
            <person name="Huang C.H."/>
            <person name="Fu G."/>
            <person name="Zhou J."/>
            <person name="Niu C."/>
            <person name="Han Z.G."/>
            <person name="Chen S.J."/>
            <person name="Chen Z."/>
        </authorList>
    </citation>
    <scope>NUCLEOTIDE SEQUENCE [MRNA] (ISOFORM 2)</scope>
    <source>
        <tissue>Hematopoietic stem cell</tissue>
    </source>
</reference>
<reference evidence="8 10" key="2">
    <citation type="journal article" date="2001" name="World J. Gastroenterol.">
        <title>Expression of liver cancer associated gene HCCA3.</title>
        <authorList>
            <person name="Wang Z.-X."/>
            <person name="Hu G.-F."/>
            <person name="Wang H.-Y."/>
            <person name="Wu M.-C."/>
        </authorList>
    </citation>
    <scope>NUCLEOTIDE SEQUENCE [MRNA] (ISOFORM 1)</scope>
    <scope>TISSUE SPECIFICITY</scope>
    <source>
        <tissue evidence="3">Placenta</tissue>
    </source>
</reference>
<reference evidence="11" key="3">
    <citation type="submission" date="2007-02" db="EMBL/GenBank/DDBJ databases">
        <authorList>
            <consortium name="NHLBI resequencing and genotyping service (RS&amp;G)"/>
        </authorList>
    </citation>
    <scope>NUCLEOTIDE SEQUENCE [GENOMIC DNA]</scope>
</reference>
<reference key="4">
    <citation type="journal article" date="2004" name="Nat. Genet.">
        <title>Complete sequencing and characterization of 21,243 full-length human cDNAs.</title>
        <authorList>
            <person name="Ota T."/>
            <person name="Suzuki Y."/>
            <person name="Nishikawa T."/>
            <person name="Otsuki T."/>
            <person name="Sugiyama T."/>
            <person name="Irie R."/>
            <person name="Wakamatsu A."/>
            <person name="Hayashi K."/>
            <person name="Sato H."/>
            <person name="Nagai K."/>
            <person name="Kimura K."/>
            <person name="Makita H."/>
            <person name="Sekine M."/>
            <person name="Obayashi M."/>
            <person name="Nishi T."/>
            <person name="Shibahara T."/>
            <person name="Tanaka T."/>
            <person name="Ishii S."/>
            <person name="Yamamoto J."/>
            <person name="Saito K."/>
            <person name="Kawai Y."/>
            <person name="Isono Y."/>
            <person name="Nakamura Y."/>
            <person name="Nagahari K."/>
            <person name="Murakami K."/>
            <person name="Yasuda T."/>
            <person name="Iwayanagi T."/>
            <person name="Wagatsuma M."/>
            <person name="Shiratori A."/>
            <person name="Sudo H."/>
            <person name="Hosoiri T."/>
            <person name="Kaku Y."/>
            <person name="Kodaira H."/>
            <person name="Kondo H."/>
            <person name="Sugawara M."/>
            <person name="Takahashi M."/>
            <person name="Kanda K."/>
            <person name="Yokoi T."/>
            <person name="Furuya T."/>
            <person name="Kikkawa E."/>
            <person name="Omura Y."/>
            <person name="Abe K."/>
            <person name="Kamihara K."/>
            <person name="Katsuta N."/>
            <person name="Sato K."/>
            <person name="Tanikawa M."/>
            <person name="Yamazaki M."/>
            <person name="Ninomiya K."/>
            <person name="Ishibashi T."/>
            <person name="Yamashita H."/>
            <person name="Murakawa K."/>
            <person name="Fujimori K."/>
            <person name="Tanai H."/>
            <person name="Kimata M."/>
            <person name="Watanabe M."/>
            <person name="Hiraoka S."/>
            <person name="Chiba Y."/>
            <person name="Ishida S."/>
            <person name="Ono Y."/>
            <person name="Takiguchi S."/>
            <person name="Watanabe S."/>
            <person name="Yosida M."/>
            <person name="Hotuta T."/>
            <person name="Kusano J."/>
            <person name="Kanehori K."/>
            <person name="Takahashi-Fujii A."/>
            <person name="Hara H."/>
            <person name="Tanase T.-O."/>
            <person name="Nomura Y."/>
            <person name="Togiya S."/>
            <person name="Komai F."/>
            <person name="Hara R."/>
            <person name="Takeuchi K."/>
            <person name="Arita M."/>
            <person name="Imose N."/>
            <person name="Musashino K."/>
            <person name="Yuuki H."/>
            <person name="Oshima A."/>
            <person name="Sasaki N."/>
            <person name="Aotsuka S."/>
            <person name="Yoshikawa Y."/>
            <person name="Matsunawa H."/>
            <person name="Ichihara T."/>
            <person name="Shiohata N."/>
            <person name="Sano S."/>
            <person name="Moriya S."/>
            <person name="Momiyama H."/>
            <person name="Satoh N."/>
            <person name="Takami S."/>
            <person name="Terashima Y."/>
            <person name="Suzuki O."/>
            <person name="Nakagawa S."/>
            <person name="Senoh A."/>
            <person name="Mizoguchi H."/>
            <person name="Goto Y."/>
            <person name="Shimizu F."/>
            <person name="Wakebe H."/>
            <person name="Hishigaki H."/>
            <person name="Watanabe T."/>
            <person name="Sugiyama A."/>
            <person name="Takemoto M."/>
            <person name="Kawakami B."/>
            <person name="Yamazaki M."/>
            <person name="Watanabe K."/>
            <person name="Kumagai A."/>
            <person name="Itakura S."/>
            <person name="Fukuzumi Y."/>
            <person name="Fujimori Y."/>
            <person name="Komiyama M."/>
            <person name="Tashiro H."/>
            <person name="Tanigami A."/>
            <person name="Fujiwara T."/>
            <person name="Ono T."/>
            <person name="Yamada K."/>
            <person name="Fujii Y."/>
            <person name="Ozaki K."/>
            <person name="Hirao M."/>
            <person name="Ohmori Y."/>
            <person name="Kawabata A."/>
            <person name="Hikiji T."/>
            <person name="Kobatake N."/>
            <person name="Inagaki H."/>
            <person name="Ikema Y."/>
            <person name="Okamoto S."/>
            <person name="Okitani R."/>
            <person name="Kawakami T."/>
            <person name="Noguchi S."/>
            <person name="Itoh T."/>
            <person name="Shigeta K."/>
            <person name="Senba T."/>
            <person name="Matsumura K."/>
            <person name="Nakajima Y."/>
            <person name="Mizuno T."/>
            <person name="Morinaga M."/>
            <person name="Sasaki M."/>
            <person name="Togashi T."/>
            <person name="Oyama M."/>
            <person name="Hata H."/>
            <person name="Watanabe M."/>
            <person name="Komatsu T."/>
            <person name="Mizushima-Sugano J."/>
            <person name="Satoh T."/>
            <person name="Shirai Y."/>
            <person name="Takahashi Y."/>
            <person name="Nakagawa K."/>
            <person name="Okumura K."/>
            <person name="Nagase T."/>
            <person name="Nomura N."/>
            <person name="Kikuchi H."/>
            <person name="Masuho Y."/>
            <person name="Yamashita R."/>
            <person name="Nakai K."/>
            <person name="Yada T."/>
            <person name="Nakamura Y."/>
            <person name="Ohara O."/>
            <person name="Isogai T."/>
            <person name="Sugano S."/>
        </authorList>
    </citation>
    <scope>NUCLEOTIDE SEQUENCE [LARGE SCALE MRNA] (ISOFORM 1)</scope>
    <source>
        <tissue>Skeletal muscle</tissue>
    </source>
</reference>
<reference key="5">
    <citation type="journal article" date="2005" name="Nature">
        <title>DNA sequence and analysis of human chromosome 18.</title>
        <authorList>
            <person name="Nusbaum C."/>
            <person name="Zody M.C."/>
            <person name="Borowsky M.L."/>
            <person name="Kamal M."/>
            <person name="Kodira C.D."/>
            <person name="Taylor T.D."/>
            <person name="Whittaker C.A."/>
            <person name="Chang J.L."/>
            <person name="Cuomo C.A."/>
            <person name="Dewar K."/>
            <person name="FitzGerald M.G."/>
            <person name="Yang X."/>
            <person name="Abouelleil A."/>
            <person name="Allen N.R."/>
            <person name="Anderson S."/>
            <person name="Bloom T."/>
            <person name="Bugalter B."/>
            <person name="Butler J."/>
            <person name="Cook A."/>
            <person name="DeCaprio D."/>
            <person name="Engels R."/>
            <person name="Garber M."/>
            <person name="Gnirke A."/>
            <person name="Hafez N."/>
            <person name="Hall J.L."/>
            <person name="Norman C.H."/>
            <person name="Itoh T."/>
            <person name="Jaffe D.B."/>
            <person name="Kuroki Y."/>
            <person name="Lehoczky J."/>
            <person name="Lui A."/>
            <person name="Macdonald P."/>
            <person name="Mauceli E."/>
            <person name="Mikkelsen T.S."/>
            <person name="Naylor J.W."/>
            <person name="Nicol R."/>
            <person name="Nguyen C."/>
            <person name="Noguchi H."/>
            <person name="O'Leary S.B."/>
            <person name="Piqani B."/>
            <person name="Smith C.L."/>
            <person name="Talamas J.A."/>
            <person name="Topham K."/>
            <person name="Totoki Y."/>
            <person name="Toyoda A."/>
            <person name="Wain H.M."/>
            <person name="Young S.K."/>
            <person name="Zeng Q."/>
            <person name="Zimmer A.R."/>
            <person name="Fujiyama A."/>
            <person name="Hattori M."/>
            <person name="Birren B.W."/>
            <person name="Sakaki Y."/>
            <person name="Lander E.S."/>
        </authorList>
    </citation>
    <scope>NUCLEOTIDE SEQUENCE [LARGE SCALE GENOMIC DNA]</scope>
</reference>
<reference evidence="11" key="6">
    <citation type="submission" date="2005-09" db="EMBL/GenBank/DDBJ databases">
        <authorList>
            <person name="Mural R.J."/>
            <person name="Istrail S."/>
            <person name="Sutton G.G."/>
            <person name="Florea L."/>
            <person name="Halpern A.L."/>
            <person name="Mobarry C.M."/>
            <person name="Lippert R."/>
            <person name="Walenz B."/>
            <person name="Shatkay H."/>
            <person name="Dew I."/>
            <person name="Miller J.R."/>
            <person name="Flanigan M.J."/>
            <person name="Edwards N.J."/>
            <person name="Bolanos R."/>
            <person name="Fasulo D."/>
            <person name="Halldorsson B.V."/>
            <person name="Hannenhalli S."/>
            <person name="Turner R."/>
            <person name="Yooseph S."/>
            <person name="Lu F."/>
            <person name="Nusskern D.R."/>
            <person name="Shue B.C."/>
            <person name="Zheng X.H."/>
            <person name="Zhong F."/>
            <person name="Delcher A.L."/>
            <person name="Huson D.H."/>
            <person name="Kravitz S.A."/>
            <person name="Mouchard L."/>
            <person name="Reinert K."/>
            <person name="Remington K.A."/>
            <person name="Clark A.G."/>
            <person name="Waterman M.S."/>
            <person name="Eichler E.E."/>
            <person name="Adams M.D."/>
            <person name="Hunkapiller M.W."/>
            <person name="Myers E.W."/>
            <person name="Venter J.C."/>
        </authorList>
    </citation>
    <scope>NUCLEOTIDE SEQUENCE [LARGE SCALE GENOMIC DNA]</scope>
</reference>
<reference evidence="9" key="7">
    <citation type="journal article" date="2004" name="Genome Res.">
        <title>The status, quality, and expansion of the NIH full-length cDNA project: the Mammalian Gene Collection (MGC).</title>
        <authorList>
            <consortium name="The MGC Project Team"/>
        </authorList>
    </citation>
    <scope>NUCLEOTIDE SEQUENCE [LARGE SCALE MRNA] (ISOFORM 1)</scope>
    <source>
        <tissue evidence="9">Pancreas</tissue>
    </source>
</reference>
<reference evidence="11" key="8">
    <citation type="submission" date="2004-06" db="EMBL/GenBank/DDBJ databases">
        <title>Cloning of human full open reading frames in Gateway(TM) system entry vector (pDONR201).</title>
        <authorList>
            <person name="Ebert L."/>
            <person name="Schick M."/>
            <person name="Neubert P."/>
            <person name="Schatten R."/>
            <person name="Henze S."/>
            <person name="Korn B."/>
        </authorList>
    </citation>
    <scope>NUCLEOTIDE SEQUENCE [LARGE SCALE MRNA] OF 41-264 (ISOFORM 1)</scope>
</reference>
<reference evidence="8 12" key="9">
    <citation type="journal article" date="2005" name="Nature">
        <title>A heterodimeric complex that promotes the assembly of mammalian 20S proteasomes.</title>
        <authorList>
            <person name="Hirano Y."/>
            <person name="Hendil K.B."/>
            <person name="Yashiroda H."/>
            <person name="Iemura S."/>
            <person name="Nagane R."/>
            <person name="Hioki Y."/>
            <person name="Natsume T."/>
            <person name="Tanaka K."/>
            <person name="Murata S."/>
        </authorList>
    </citation>
    <scope>IDENTIFICATION</scope>
    <scope>FUNCTION</scope>
    <scope>INTERACTION WITH PSMA5; PSMA7 AND PSMG1</scope>
    <scope>DEGRADATION BY THE PROTEASOME</scope>
</reference>
<reference evidence="8" key="10">
    <citation type="journal article" date="2007" name="Mol. Cell">
        <title>20S proteasome assembly is orchestrated by two distinct pairs of chaperones in yeast and in mammals.</title>
        <authorList>
            <person name="Le Tallec B."/>
            <person name="Barrault M.-B."/>
            <person name="Courbeyrette R."/>
            <person name="Guerois R."/>
            <person name="Marsolier-Kergoat M.-C."/>
            <person name="Peyroche A."/>
        </authorList>
    </citation>
    <scope>FUNCTION</scope>
</reference>
<reference key="11">
    <citation type="journal article" date="2011" name="BMC Syst. Biol.">
        <title>Initial characterization of the human central proteome.</title>
        <authorList>
            <person name="Burkard T.R."/>
            <person name="Planyavsky M."/>
            <person name="Kaupe I."/>
            <person name="Breitwieser F.P."/>
            <person name="Buerckstuemmer T."/>
            <person name="Bennett K.L."/>
            <person name="Superti-Furga G."/>
            <person name="Colinge J."/>
        </authorList>
    </citation>
    <scope>IDENTIFICATION BY MASS SPECTROMETRY [LARGE SCALE ANALYSIS]</scope>
</reference>
<reference key="12">
    <citation type="journal article" date="2013" name="J. Proteome Res.">
        <title>Toward a comprehensive characterization of a human cancer cell phosphoproteome.</title>
        <authorList>
            <person name="Zhou H."/>
            <person name="Di Palma S."/>
            <person name="Preisinger C."/>
            <person name="Peng M."/>
            <person name="Polat A.N."/>
            <person name="Heck A.J."/>
            <person name="Mohammed S."/>
        </authorList>
    </citation>
    <scope>PHOSPHORYLATION [LARGE SCALE ANALYSIS] AT THR-137</scope>
    <scope>IDENTIFICATION BY MASS SPECTROMETRY [LARGE SCALE ANALYSIS]</scope>
    <source>
        <tissue>Erythroleukemia</tissue>
    </source>
</reference>
<reference key="13">
    <citation type="journal article" date="2019" name="J. Allergy Clin. Immunol.">
        <title>Novel proteasome assembly chaperone mutations in PSMG2/PAC2 cause the autoinflammatory interferonopathy CANDLE/PRAAS4.</title>
        <authorList>
            <person name="de Jesus A.A."/>
            <person name="Brehm A."/>
            <person name="VanTries R."/>
            <person name="Pillet P."/>
            <person name="Parentelli A.S."/>
            <person name="Montealegre Sanchez G.A."/>
            <person name="Deng Z."/>
            <person name="Paut I.K."/>
            <person name="Goldbach-Mansky R."/>
            <person name="Krueger E."/>
        </authorList>
    </citation>
    <scope>INVOLVEMENT IN PRAAS4</scope>
    <scope>VARIANT PRAAS4 LYS-225</scope>
</reference>
<accession>Q969U7</accession>
<accession>B0YJB3</accession>
<accession>Q6IAH4</accession>
<accession>Q9NRV1</accession>
<accession>V9GYH7</accession>
<feature type="chain" id="PRO_0000322552" description="Proteasome assembly chaperone 2">
    <location>
        <begin position="1"/>
        <end position="264"/>
    </location>
</feature>
<feature type="modified residue" description="Phosphothreonine" evidence="14">
    <location>
        <position position="137"/>
    </location>
</feature>
<feature type="splice variant" id="VSP_055721" description="In isoform 2." evidence="7">
    <location>
        <begin position="1"/>
        <end position="31"/>
    </location>
</feature>
<feature type="sequence variant" id="VAR_085403" description="In PRAAS4; uncertain significance; dbSNP:rs1323730269." evidence="6">
    <original>N</original>
    <variation>K</variation>
    <location>
        <position position="225"/>
    </location>
</feature>
<feature type="sequence conflict" description="In Ref. 1; AAF87314." evidence="8" ref="1">
    <original>R</original>
    <variation>E</variation>
    <location>
        <position position="117"/>
    </location>
</feature>
<feature type="sequence conflict" description="In Ref. 1; AAF87314." evidence="8" ref="1">
    <original>E</original>
    <variation>D</variation>
    <location>
        <position position="164"/>
    </location>
</feature>
<feature type="strand" evidence="15">
    <location>
        <begin position="2"/>
        <end position="8"/>
    </location>
</feature>
<feature type="strand" evidence="15">
    <location>
        <begin position="16"/>
        <end position="20"/>
    </location>
</feature>
<feature type="helix" evidence="15">
    <location>
        <begin position="24"/>
        <end position="26"/>
    </location>
</feature>
<feature type="helix" evidence="15">
    <location>
        <begin position="27"/>
        <end position="39"/>
    </location>
</feature>
<feature type="strand" evidence="15">
    <location>
        <begin position="42"/>
        <end position="47"/>
    </location>
</feature>
<feature type="strand" evidence="15">
    <location>
        <begin position="50"/>
        <end position="52"/>
    </location>
</feature>
<feature type="strand" evidence="15">
    <location>
        <begin position="55"/>
        <end position="58"/>
    </location>
</feature>
<feature type="strand" evidence="15">
    <location>
        <begin position="64"/>
        <end position="66"/>
    </location>
</feature>
<feature type="helix" evidence="15">
    <location>
        <begin position="67"/>
        <end position="69"/>
    </location>
</feature>
<feature type="strand" evidence="15">
    <location>
        <begin position="72"/>
        <end position="80"/>
    </location>
</feature>
<feature type="turn" evidence="15">
    <location>
        <begin position="81"/>
        <end position="84"/>
    </location>
</feature>
<feature type="strand" evidence="15">
    <location>
        <begin position="85"/>
        <end position="90"/>
    </location>
</feature>
<feature type="helix" evidence="15">
    <location>
        <begin position="99"/>
        <end position="113"/>
    </location>
</feature>
<feature type="strand" evidence="15">
    <location>
        <begin position="116"/>
        <end position="121"/>
    </location>
</feature>
<feature type="helix" evidence="15">
    <location>
        <begin position="126"/>
        <end position="128"/>
    </location>
</feature>
<feature type="helix" evidence="15">
    <location>
        <begin position="131"/>
        <end position="134"/>
    </location>
</feature>
<feature type="strand" evidence="15">
    <location>
        <begin position="138"/>
        <end position="143"/>
    </location>
</feature>
<feature type="strand" evidence="17">
    <location>
        <begin position="145"/>
        <end position="147"/>
    </location>
</feature>
<feature type="helix" evidence="15">
    <location>
        <begin position="149"/>
        <end position="158"/>
    </location>
</feature>
<feature type="turn" evidence="16">
    <location>
        <begin position="182"/>
        <end position="184"/>
    </location>
</feature>
<feature type="helix" evidence="15">
    <location>
        <begin position="187"/>
        <end position="196"/>
    </location>
</feature>
<feature type="strand" evidence="15">
    <location>
        <begin position="201"/>
        <end position="208"/>
    </location>
</feature>
<feature type="helix" evidence="15">
    <location>
        <begin position="214"/>
        <end position="228"/>
    </location>
</feature>
<feature type="strand" evidence="16">
    <location>
        <begin position="251"/>
        <end position="253"/>
    </location>
</feature>
<feature type="turn" evidence="16">
    <location>
        <begin position="261"/>
        <end position="263"/>
    </location>
</feature>
<evidence type="ECO:0000250" key="1">
    <source>
        <dbReference type="UniProtKB" id="Q9EST4"/>
    </source>
</evidence>
<evidence type="ECO:0000255" key="2"/>
<evidence type="ECO:0000269" key="3">
    <source>
    </source>
</evidence>
<evidence type="ECO:0000269" key="4">
    <source>
    </source>
</evidence>
<evidence type="ECO:0000269" key="5">
    <source>
    </source>
</evidence>
<evidence type="ECO:0000269" key="6">
    <source>
    </source>
</evidence>
<evidence type="ECO:0000303" key="7">
    <source>
    </source>
</evidence>
<evidence type="ECO:0000305" key="8"/>
<evidence type="ECO:0000312" key="9">
    <source>
        <dbReference type="EMBL" id="AAH13356.1"/>
    </source>
</evidence>
<evidence type="ECO:0000312" key="10">
    <source>
        <dbReference type="EMBL" id="AAK69439.2"/>
    </source>
</evidence>
<evidence type="ECO:0000312" key="11">
    <source>
        <dbReference type="EMBL" id="EAX01540.1"/>
    </source>
</evidence>
<evidence type="ECO:0000312" key="12">
    <source>
        <dbReference type="EMBL" id="FAA00023.1"/>
    </source>
</evidence>
<evidence type="ECO:0000312" key="13">
    <source>
        <dbReference type="HGNC" id="HGNC:24929"/>
    </source>
</evidence>
<evidence type="ECO:0007744" key="14">
    <source>
    </source>
</evidence>
<evidence type="ECO:0007829" key="15">
    <source>
        <dbReference type="PDB" id="8QYL"/>
    </source>
</evidence>
<evidence type="ECO:0007829" key="16">
    <source>
        <dbReference type="PDB" id="8TM3"/>
    </source>
</evidence>
<evidence type="ECO:0007829" key="17">
    <source>
        <dbReference type="PDB" id="8TM4"/>
    </source>
</evidence>
<gene>
    <name evidence="9" type="primary">PSMG2</name>
    <name evidence="10" type="synonym">HCCA3</name>
    <name evidence="12" type="synonym">PAC2</name>
    <name evidence="13" type="synonym">TNFSF5IP1</name>
</gene>
<comment type="function">
    <text evidence="4 5">Chaperone protein which promotes assembly of the 20S proteasome as part of a heterodimer with PSMG1. The PSMG1-PSMG2 heterodimer binds to the PSMA5 and PSMA7 proteasome subunits, promotes assembly of the proteasome alpha subunits into the heteroheptameric alpha ring and prevents alpha ring dimerization.</text>
</comment>
<comment type="subunit">
    <text evidence="4">Forms a heterodimer with PSMG1. The PSMG1-PSMG2 heterodimer interacts directly with the PSMA5 and PSMA7 proteasome alpha subunits.</text>
</comment>
<comment type="interaction">
    <interactant intactId="EBI-723276">
        <id>Q969U7</id>
    </interactant>
    <interactant intactId="EBI-948001">
        <id>Q15323</id>
        <label>KRT31</label>
    </interactant>
    <organismsDiffer>false</organismsDiffer>
    <experiments>6</experiments>
</comment>
<comment type="interaction">
    <interactant intactId="EBI-723276">
        <id>Q969U7</id>
    </interactant>
    <interactant intactId="EBI-945833">
        <id>Q7Z3S9</id>
        <label>NOTCH2NLA</label>
    </interactant>
    <organismsDiffer>false</organismsDiffer>
    <experiments>3</experiments>
</comment>
<comment type="interaction">
    <interactant intactId="EBI-723276">
        <id>Q969U7</id>
    </interactant>
    <interactant intactId="EBI-6286129">
        <id>O95456</id>
        <label>PSMG1</label>
    </interactant>
    <organismsDiffer>false</organismsDiffer>
    <experiments>11</experiments>
</comment>
<comment type="interaction">
    <interactant intactId="EBI-723276">
        <id>Q969U7</id>
    </interactant>
    <interactant intactId="EBI-533224">
        <id>P15884</id>
        <label>TCF4</label>
    </interactant>
    <organismsDiffer>false</organismsDiffer>
    <experiments>3</experiments>
</comment>
<comment type="subcellular location">
    <subcellularLocation>
        <location evidence="1">Nucleus</location>
    </subcellularLocation>
</comment>
<comment type="alternative products">
    <event type="alternative splicing"/>
    <isoform>
        <id>Q969U7-1</id>
        <name>1</name>
        <sequence type="displayed"/>
    </isoform>
    <isoform>
        <id>Q969U7-2</id>
        <name>2</name>
        <sequence type="described" ref="VSP_055721"/>
    </isoform>
</comment>
<comment type="tissue specificity">
    <text evidence="3">Widely expressed with highest levels in lung, brain and colon. Moderately expressed in muscle, stomach, spleen and heart. Weakly expressed in small intestine, pancreas and liver. Highly expressed in hepatocellular carcinomas with low levels in surrounding liver tissue.</text>
</comment>
<comment type="PTM">
    <text evidence="4">Degraded by the proteasome upon completion of 20S proteasome maturation.</text>
</comment>
<comment type="disease" evidence="6">
    <disease id="DI-06047">
        <name>Proteasome-associated autoinflammatory syndrome 4</name>
        <acronym>PRAAS4</acronym>
        <description>An autosomal recessive, autoinflammatory disorder characterized by panniculitis and erythematous skin lesions apparent in early infancy. Additional features include hepatosplenomegaly, lymphadenopathy, autoimmune hemolytic anemia, fever, generalized lipodystrophy, myositis, joint contractures, and mild motor and speech delay.</description>
        <dbReference type="MIM" id="619183"/>
    </disease>
    <text>The disease may be caused by variants affecting the gene represented in this entry.</text>
</comment>
<comment type="similarity">
    <text evidence="2">Belongs to the PSMG2 family.</text>
</comment>
<comment type="sequence caution" evidence="8">
    <conflict type="erroneous initiation">
        <sequence resource="EMBL-CDS" id="AAF87314"/>
    </conflict>
    <text>Truncated N-terminus.</text>
</comment>
<keyword id="KW-0002">3D-structure</keyword>
<keyword id="KW-0025">Alternative splicing</keyword>
<keyword id="KW-0143">Chaperone</keyword>
<keyword id="KW-0539">Nucleus</keyword>
<keyword id="KW-0597">Phosphoprotein</keyword>
<keyword id="KW-1267">Proteomics identification</keyword>
<keyword id="KW-1185">Reference proteome</keyword>
<sequence length="264" mass="29396">MFVPCGESAPDLAGFTLLMPAVSVGNVGQLAMDLIISTLNMSKIGYFYTDCLVPMVGNNPYATTEGNSTELSINAEVYSLPSRKLVALQLRSIFIKYKSKPFCEKLLSWVKSSGCARVIVLSSSHSYQRNDLQLRSTPFRYLLTPSMQKSVQNKIKSLNWEEMEKSRCIPEIDDSEFCIRIPGGGITKTLYDESCSKEIQMAVLLKFVSEGDNIPDALGLVEYLNEWLQILKPLSDDPTVSASRWKIPSSWRLLFGSGLPPALF</sequence>
<name>PSMG2_HUMAN</name>
<protein>
    <recommendedName>
        <fullName>Proteasome assembly chaperone 2</fullName>
        <shortName>PAC-2</shortName>
    </recommendedName>
    <alternativeName>
        <fullName>Hepatocellular carcinoma-susceptibility protein 3</fullName>
    </alternativeName>
    <alternativeName>
        <fullName>Tumor necrosis factor superfamily member 5-induced protein 1</fullName>
    </alternativeName>
</protein>
<proteinExistence type="evidence at protein level"/>
<organism>
    <name type="scientific">Homo sapiens</name>
    <name type="common">Human</name>
    <dbReference type="NCBI Taxonomy" id="9606"/>
    <lineage>
        <taxon>Eukaryota</taxon>
        <taxon>Metazoa</taxon>
        <taxon>Chordata</taxon>
        <taxon>Craniata</taxon>
        <taxon>Vertebrata</taxon>
        <taxon>Euteleostomi</taxon>
        <taxon>Mammalia</taxon>
        <taxon>Eutheria</taxon>
        <taxon>Euarchontoglires</taxon>
        <taxon>Primates</taxon>
        <taxon>Haplorrhini</taxon>
        <taxon>Catarrhini</taxon>
        <taxon>Hominidae</taxon>
        <taxon>Homo</taxon>
    </lineage>
</organism>